<gene>
    <name evidence="1" type="primary">rpsD</name>
    <name type="ordered locus">APJL_1819</name>
</gene>
<comment type="function">
    <text evidence="1">One of the primary rRNA binding proteins, it binds directly to 16S rRNA where it nucleates assembly of the body of the 30S subunit.</text>
</comment>
<comment type="function">
    <text evidence="1">With S5 and S12 plays an important role in translational accuracy.</text>
</comment>
<comment type="subunit">
    <text evidence="1">Part of the 30S ribosomal subunit. Contacts protein S5. The interaction surface between S4 and S5 is involved in control of translational fidelity.</text>
</comment>
<comment type="similarity">
    <text evidence="1">Belongs to the universal ribosomal protein uS4 family.</text>
</comment>
<protein>
    <recommendedName>
        <fullName evidence="1">Small ribosomal subunit protein uS4</fullName>
    </recommendedName>
    <alternativeName>
        <fullName evidence="2">30S ribosomal protein S4</fullName>
    </alternativeName>
</protein>
<proteinExistence type="inferred from homology"/>
<accession>B0BSV5</accession>
<sequence length="208" mass="23784">MARYLGPKLKLSRREGTDLFLKSGVRAIESKCRNRLDVAPGQHGARKPRLSDYGSQLREKQKVRRIYGILERQFRNYYTEANRLKGNTGENLLVLLEGRLDNVVYRMGFAATRAEARQLVSHKSIVVNGRVVNIPSYQVSVDDVVAVREKSKKQARIKASLELATQREKPTWLEVDATKMEGVFKRTPERSDLSADINEHLIVELYSK</sequence>
<feature type="chain" id="PRO_1000140676" description="Small ribosomal subunit protein uS4">
    <location>
        <begin position="1"/>
        <end position="208"/>
    </location>
</feature>
<feature type="domain" description="S4 RNA-binding" evidence="1">
    <location>
        <begin position="98"/>
        <end position="158"/>
    </location>
</feature>
<reference key="1">
    <citation type="journal article" date="2008" name="PLoS ONE">
        <title>Genome biology of Actinobacillus pleuropneumoniae JL03, an isolate of serotype 3 prevalent in China.</title>
        <authorList>
            <person name="Xu Z."/>
            <person name="Zhou Y."/>
            <person name="Li L."/>
            <person name="Zhou R."/>
            <person name="Xiao S."/>
            <person name="Wan Y."/>
            <person name="Zhang S."/>
            <person name="Wang K."/>
            <person name="Li W."/>
            <person name="Li L."/>
            <person name="Jin H."/>
            <person name="Kang M."/>
            <person name="Dalai B."/>
            <person name="Li T."/>
            <person name="Liu L."/>
            <person name="Cheng Y."/>
            <person name="Zhang L."/>
            <person name="Xu T."/>
            <person name="Zheng H."/>
            <person name="Pu S."/>
            <person name="Wang B."/>
            <person name="Gu W."/>
            <person name="Zhang X.L."/>
            <person name="Zhu G.-F."/>
            <person name="Wang S."/>
            <person name="Zhao G.-P."/>
            <person name="Chen H."/>
        </authorList>
    </citation>
    <scope>NUCLEOTIDE SEQUENCE [LARGE SCALE GENOMIC DNA]</scope>
    <source>
        <strain>JL03</strain>
    </source>
</reference>
<evidence type="ECO:0000255" key="1">
    <source>
        <dbReference type="HAMAP-Rule" id="MF_01306"/>
    </source>
</evidence>
<evidence type="ECO:0000305" key="2"/>
<dbReference type="EMBL" id="CP000687">
    <property type="protein sequence ID" value="ABY70369.1"/>
    <property type="molecule type" value="Genomic_DNA"/>
</dbReference>
<dbReference type="RefSeq" id="WP_005599325.1">
    <property type="nucleotide sequence ID" value="NC_010278.1"/>
</dbReference>
<dbReference type="SMR" id="B0BSV5"/>
<dbReference type="GeneID" id="92743631"/>
<dbReference type="KEGG" id="apj:APJL_1819"/>
<dbReference type="HOGENOM" id="CLU_092403_0_2_6"/>
<dbReference type="Proteomes" id="UP000008547">
    <property type="component" value="Chromosome"/>
</dbReference>
<dbReference type="GO" id="GO:0015935">
    <property type="term" value="C:small ribosomal subunit"/>
    <property type="evidence" value="ECO:0007669"/>
    <property type="project" value="InterPro"/>
</dbReference>
<dbReference type="GO" id="GO:0019843">
    <property type="term" value="F:rRNA binding"/>
    <property type="evidence" value="ECO:0007669"/>
    <property type="project" value="UniProtKB-UniRule"/>
</dbReference>
<dbReference type="GO" id="GO:0003735">
    <property type="term" value="F:structural constituent of ribosome"/>
    <property type="evidence" value="ECO:0007669"/>
    <property type="project" value="InterPro"/>
</dbReference>
<dbReference type="GO" id="GO:0042274">
    <property type="term" value="P:ribosomal small subunit biogenesis"/>
    <property type="evidence" value="ECO:0007669"/>
    <property type="project" value="TreeGrafter"/>
</dbReference>
<dbReference type="GO" id="GO:0006412">
    <property type="term" value="P:translation"/>
    <property type="evidence" value="ECO:0007669"/>
    <property type="project" value="UniProtKB-UniRule"/>
</dbReference>
<dbReference type="CDD" id="cd00165">
    <property type="entry name" value="S4"/>
    <property type="match status" value="1"/>
</dbReference>
<dbReference type="FunFam" id="1.10.1050.10:FF:000001">
    <property type="entry name" value="30S ribosomal protein S4"/>
    <property type="match status" value="1"/>
</dbReference>
<dbReference type="FunFam" id="3.10.290.10:FF:000001">
    <property type="entry name" value="30S ribosomal protein S4"/>
    <property type="match status" value="1"/>
</dbReference>
<dbReference type="Gene3D" id="1.10.1050.10">
    <property type="entry name" value="Ribosomal Protein S4 Delta 41, Chain A, domain 1"/>
    <property type="match status" value="1"/>
</dbReference>
<dbReference type="Gene3D" id="3.10.290.10">
    <property type="entry name" value="RNA-binding S4 domain"/>
    <property type="match status" value="1"/>
</dbReference>
<dbReference type="HAMAP" id="MF_01306_B">
    <property type="entry name" value="Ribosomal_uS4_B"/>
    <property type="match status" value="1"/>
</dbReference>
<dbReference type="InterPro" id="IPR022801">
    <property type="entry name" value="Ribosomal_uS4"/>
</dbReference>
<dbReference type="InterPro" id="IPR005709">
    <property type="entry name" value="Ribosomal_uS4_bac-type"/>
</dbReference>
<dbReference type="InterPro" id="IPR018079">
    <property type="entry name" value="Ribosomal_uS4_CS"/>
</dbReference>
<dbReference type="InterPro" id="IPR001912">
    <property type="entry name" value="Ribosomal_uS4_N"/>
</dbReference>
<dbReference type="InterPro" id="IPR002942">
    <property type="entry name" value="S4_RNA-bd"/>
</dbReference>
<dbReference type="InterPro" id="IPR036986">
    <property type="entry name" value="S4_RNA-bd_sf"/>
</dbReference>
<dbReference type="NCBIfam" id="NF003717">
    <property type="entry name" value="PRK05327.1"/>
    <property type="match status" value="1"/>
</dbReference>
<dbReference type="NCBIfam" id="TIGR01017">
    <property type="entry name" value="rpsD_bact"/>
    <property type="match status" value="1"/>
</dbReference>
<dbReference type="PANTHER" id="PTHR11831">
    <property type="entry name" value="30S 40S RIBOSOMAL PROTEIN"/>
    <property type="match status" value="1"/>
</dbReference>
<dbReference type="PANTHER" id="PTHR11831:SF4">
    <property type="entry name" value="SMALL RIBOSOMAL SUBUNIT PROTEIN US4M"/>
    <property type="match status" value="1"/>
</dbReference>
<dbReference type="Pfam" id="PF00163">
    <property type="entry name" value="Ribosomal_S4"/>
    <property type="match status" value="1"/>
</dbReference>
<dbReference type="Pfam" id="PF01479">
    <property type="entry name" value="S4"/>
    <property type="match status" value="1"/>
</dbReference>
<dbReference type="SMART" id="SM01390">
    <property type="entry name" value="Ribosomal_S4"/>
    <property type="match status" value="1"/>
</dbReference>
<dbReference type="SMART" id="SM00363">
    <property type="entry name" value="S4"/>
    <property type="match status" value="1"/>
</dbReference>
<dbReference type="SUPFAM" id="SSF55174">
    <property type="entry name" value="Alpha-L RNA-binding motif"/>
    <property type="match status" value="1"/>
</dbReference>
<dbReference type="PROSITE" id="PS00632">
    <property type="entry name" value="RIBOSOMAL_S4"/>
    <property type="match status" value="1"/>
</dbReference>
<dbReference type="PROSITE" id="PS50889">
    <property type="entry name" value="S4"/>
    <property type="match status" value="1"/>
</dbReference>
<keyword id="KW-0687">Ribonucleoprotein</keyword>
<keyword id="KW-0689">Ribosomal protein</keyword>
<keyword id="KW-0694">RNA-binding</keyword>
<keyword id="KW-0699">rRNA-binding</keyword>
<organism>
    <name type="scientific">Actinobacillus pleuropneumoniae serotype 3 (strain JL03)</name>
    <dbReference type="NCBI Taxonomy" id="434271"/>
    <lineage>
        <taxon>Bacteria</taxon>
        <taxon>Pseudomonadati</taxon>
        <taxon>Pseudomonadota</taxon>
        <taxon>Gammaproteobacteria</taxon>
        <taxon>Pasteurellales</taxon>
        <taxon>Pasteurellaceae</taxon>
        <taxon>Actinobacillus</taxon>
    </lineage>
</organism>
<name>RS4_ACTPJ</name>